<accession>Q1WVJ7</accession>
<evidence type="ECO:0000255" key="1">
    <source>
        <dbReference type="HAMAP-Rule" id="MF_01471"/>
    </source>
</evidence>
<proteinExistence type="inferred from homology"/>
<reference key="1">
    <citation type="journal article" date="2006" name="Proc. Natl. Acad. Sci. U.S.A.">
        <title>Multireplicon genome architecture of Lactobacillus salivarius.</title>
        <authorList>
            <person name="Claesson M.J."/>
            <person name="Li Y."/>
            <person name="Leahy S."/>
            <person name="Canchaya C."/>
            <person name="van Pijkeren J.P."/>
            <person name="Cerdeno-Tarraga A.M."/>
            <person name="Parkhill J."/>
            <person name="Flynn S."/>
            <person name="O'Sullivan G.C."/>
            <person name="Collins J.K."/>
            <person name="Higgins D."/>
            <person name="Shanahan F."/>
            <person name="Fitzgerald G.F."/>
            <person name="van Sinderen D."/>
            <person name="O'Toole P.W."/>
        </authorList>
    </citation>
    <scope>NUCLEOTIDE SEQUENCE [LARGE SCALE GENOMIC DNA]</scope>
    <source>
        <strain>UCC118</strain>
    </source>
</reference>
<sequence length="101" mass="12048">MRLMIIFDLPVETSEERKEYRKFRKNLINEGFIMIQYSVYVRVCVNKKSAEFTEKRIESFLPSKGVVQSLILTEKQYNDMHFLLGKKIKEVRNSAERTIIL</sequence>
<organism>
    <name type="scientific">Ligilactobacillus salivarius (strain UCC118)</name>
    <name type="common">Lactobacillus salivarius</name>
    <dbReference type="NCBI Taxonomy" id="362948"/>
    <lineage>
        <taxon>Bacteria</taxon>
        <taxon>Bacillati</taxon>
        <taxon>Bacillota</taxon>
        <taxon>Bacilli</taxon>
        <taxon>Lactobacillales</taxon>
        <taxon>Lactobacillaceae</taxon>
        <taxon>Ligilactobacillus</taxon>
    </lineage>
</organism>
<dbReference type="EC" id="3.1.-.-" evidence="1"/>
<dbReference type="EMBL" id="CP000233">
    <property type="protein sequence ID" value="ABD98920.1"/>
    <property type="molecule type" value="Genomic_DNA"/>
</dbReference>
<dbReference type="RefSeq" id="WP_011475522.1">
    <property type="nucleotide sequence ID" value="NC_007929.1"/>
</dbReference>
<dbReference type="RefSeq" id="YP_535003.1">
    <property type="nucleotide sequence ID" value="NC_007929.1"/>
</dbReference>
<dbReference type="SMR" id="Q1WVJ7"/>
<dbReference type="STRING" id="362948.LSL_0099"/>
<dbReference type="KEGG" id="lsl:LSL_0099"/>
<dbReference type="PATRIC" id="fig|362948.14.peg.177"/>
<dbReference type="HOGENOM" id="CLU_150500_1_0_9"/>
<dbReference type="OrthoDB" id="9791737at2"/>
<dbReference type="Proteomes" id="UP000006559">
    <property type="component" value="Chromosome"/>
</dbReference>
<dbReference type="GO" id="GO:0046872">
    <property type="term" value="F:metal ion binding"/>
    <property type="evidence" value="ECO:0007669"/>
    <property type="project" value="UniProtKB-UniRule"/>
</dbReference>
<dbReference type="GO" id="GO:0004521">
    <property type="term" value="F:RNA endonuclease activity"/>
    <property type="evidence" value="ECO:0007669"/>
    <property type="project" value="InterPro"/>
</dbReference>
<dbReference type="GO" id="GO:0051607">
    <property type="term" value="P:defense response to virus"/>
    <property type="evidence" value="ECO:0007669"/>
    <property type="project" value="UniProtKB-UniRule"/>
</dbReference>
<dbReference type="GO" id="GO:0043571">
    <property type="term" value="P:maintenance of CRISPR repeat elements"/>
    <property type="evidence" value="ECO:0007669"/>
    <property type="project" value="UniProtKB-UniRule"/>
</dbReference>
<dbReference type="HAMAP" id="MF_01471">
    <property type="entry name" value="Cas2"/>
    <property type="match status" value="1"/>
</dbReference>
<dbReference type="InterPro" id="IPR021127">
    <property type="entry name" value="CRISPR_associated_Cas2"/>
</dbReference>
<dbReference type="InterPro" id="IPR019199">
    <property type="entry name" value="Virulence_VapD/CRISPR_Cas2"/>
</dbReference>
<dbReference type="NCBIfam" id="TIGR01573">
    <property type="entry name" value="cas2"/>
    <property type="match status" value="1"/>
</dbReference>
<dbReference type="Pfam" id="PF09827">
    <property type="entry name" value="CRISPR_Cas2"/>
    <property type="match status" value="1"/>
</dbReference>
<dbReference type="SUPFAM" id="SSF143430">
    <property type="entry name" value="TTP0101/SSO1404-like"/>
    <property type="match status" value="1"/>
</dbReference>
<protein>
    <recommendedName>
        <fullName evidence="1">CRISPR-associated endoribonuclease Cas2</fullName>
        <ecNumber evidence="1">3.1.-.-</ecNumber>
    </recommendedName>
</protein>
<keyword id="KW-0051">Antiviral defense</keyword>
<keyword id="KW-0255">Endonuclease</keyword>
<keyword id="KW-0378">Hydrolase</keyword>
<keyword id="KW-0460">Magnesium</keyword>
<keyword id="KW-0479">Metal-binding</keyword>
<keyword id="KW-0540">Nuclease</keyword>
<keyword id="KW-1185">Reference proteome</keyword>
<feature type="chain" id="PRO_0000417717" description="CRISPR-associated endoribonuclease Cas2">
    <location>
        <begin position="1"/>
        <end position="101"/>
    </location>
</feature>
<feature type="binding site" evidence="1">
    <location>
        <position position="8"/>
    </location>
    <ligand>
        <name>Mg(2+)</name>
        <dbReference type="ChEBI" id="CHEBI:18420"/>
        <note>catalytic</note>
    </ligand>
</feature>
<gene>
    <name evidence="1" type="primary">cas2</name>
    <name type="ordered locus">LSL_0099</name>
</gene>
<comment type="function">
    <text evidence="1">CRISPR (clustered regularly interspaced short palindromic repeat), is an adaptive immune system that provides protection against mobile genetic elements (viruses, transposable elements and conjugative plasmids). CRISPR clusters contain sequences complementary to antecedent mobile elements and target invading nucleic acids. CRISPR clusters are transcribed and processed into CRISPR RNA (crRNA). Functions as a ssRNA-specific endoribonuclease. Involved in the integration of spacer DNA into the CRISPR cassette.</text>
</comment>
<comment type="cofactor">
    <cofactor evidence="1">
        <name>Mg(2+)</name>
        <dbReference type="ChEBI" id="CHEBI:18420"/>
    </cofactor>
</comment>
<comment type="subunit">
    <text evidence="1">Homodimer, forms a heterotetramer with a Cas1 homodimer.</text>
</comment>
<comment type="similarity">
    <text evidence="1">Belongs to the CRISPR-associated endoribonuclease Cas2 protein family.</text>
</comment>
<name>CAS2_LIGS1</name>